<gene>
    <name evidence="1" type="primary">nadK</name>
    <name type="ordered locus">PYRAB09100</name>
    <name type="ORF">PAB1756</name>
</gene>
<keyword id="KW-0067">ATP-binding</keyword>
<keyword id="KW-0963">Cytoplasm</keyword>
<keyword id="KW-0418">Kinase</keyword>
<keyword id="KW-0520">NAD</keyword>
<keyword id="KW-0521">NADP</keyword>
<keyword id="KW-0547">Nucleotide-binding</keyword>
<keyword id="KW-0808">Transferase</keyword>
<reference key="1">
    <citation type="journal article" date="2003" name="Mol. Microbiol.">
        <title>An integrated analysis of the genome of the hyperthermophilic archaeon Pyrococcus abyssi.</title>
        <authorList>
            <person name="Cohen G.N."/>
            <person name="Barbe V."/>
            <person name="Flament D."/>
            <person name="Galperin M."/>
            <person name="Heilig R."/>
            <person name="Lecompte O."/>
            <person name="Poch O."/>
            <person name="Prieur D."/>
            <person name="Querellou J."/>
            <person name="Ripp R."/>
            <person name="Thierry J.-C."/>
            <person name="Van der Oost J."/>
            <person name="Weissenbach J."/>
            <person name="Zivanovic Y."/>
            <person name="Forterre P."/>
        </authorList>
    </citation>
    <scope>NUCLEOTIDE SEQUENCE [LARGE SCALE GENOMIC DNA]</scope>
    <source>
        <strain>GE5 / Orsay</strain>
    </source>
</reference>
<reference key="2">
    <citation type="journal article" date="2012" name="Curr. Microbiol.">
        <title>Re-annotation of two hyperthermophilic archaea Pyrococcus abyssi GE5 and Pyrococcus furiosus DSM 3638.</title>
        <authorList>
            <person name="Gao J."/>
            <person name="Wang J."/>
        </authorList>
    </citation>
    <scope>GENOME REANNOTATION</scope>
    <source>
        <strain>GE5 / Orsay</strain>
    </source>
</reference>
<protein>
    <recommendedName>
        <fullName evidence="1">NAD kinase</fullName>
        <ecNumber evidence="1">2.7.1.23</ecNumber>
    </recommendedName>
    <alternativeName>
        <fullName evidence="1">ATP-dependent NAD kinase</fullName>
    </alternativeName>
</protein>
<dbReference type="EC" id="2.7.1.23" evidence="1"/>
<dbReference type="EMBL" id="AJ248285">
    <property type="protein sequence ID" value="CAB49824.1"/>
    <property type="molecule type" value="Genomic_DNA"/>
</dbReference>
<dbReference type="EMBL" id="HE613800">
    <property type="protein sequence ID" value="CCE70318.1"/>
    <property type="molecule type" value="Genomic_DNA"/>
</dbReference>
<dbReference type="PIR" id="G75138">
    <property type="entry name" value="G75138"/>
</dbReference>
<dbReference type="RefSeq" id="WP_010868033.1">
    <property type="nucleotide sequence ID" value="NC_000868.1"/>
</dbReference>
<dbReference type="SMR" id="Q9V081"/>
<dbReference type="STRING" id="272844.PAB1756"/>
<dbReference type="KEGG" id="pab:PAB1756"/>
<dbReference type="PATRIC" id="fig|272844.11.peg.963"/>
<dbReference type="eggNOG" id="arCOG01348">
    <property type="taxonomic scope" value="Archaea"/>
</dbReference>
<dbReference type="HOGENOM" id="CLU_008831_0_3_2"/>
<dbReference type="OrthoDB" id="77798at2157"/>
<dbReference type="PhylomeDB" id="Q9V081"/>
<dbReference type="Proteomes" id="UP000000810">
    <property type="component" value="Chromosome"/>
</dbReference>
<dbReference type="Proteomes" id="UP000009139">
    <property type="component" value="Chromosome"/>
</dbReference>
<dbReference type="GO" id="GO:0005737">
    <property type="term" value="C:cytoplasm"/>
    <property type="evidence" value="ECO:0007669"/>
    <property type="project" value="UniProtKB-SubCell"/>
</dbReference>
<dbReference type="GO" id="GO:0005524">
    <property type="term" value="F:ATP binding"/>
    <property type="evidence" value="ECO:0007669"/>
    <property type="project" value="UniProtKB-KW"/>
</dbReference>
<dbReference type="GO" id="GO:0046872">
    <property type="term" value="F:metal ion binding"/>
    <property type="evidence" value="ECO:0007669"/>
    <property type="project" value="UniProtKB-UniRule"/>
</dbReference>
<dbReference type="GO" id="GO:0003951">
    <property type="term" value="F:NAD+ kinase activity"/>
    <property type="evidence" value="ECO:0007669"/>
    <property type="project" value="UniProtKB-UniRule"/>
</dbReference>
<dbReference type="GO" id="GO:0019674">
    <property type="term" value="P:NAD metabolic process"/>
    <property type="evidence" value="ECO:0007669"/>
    <property type="project" value="InterPro"/>
</dbReference>
<dbReference type="GO" id="GO:0006741">
    <property type="term" value="P:NADP biosynthetic process"/>
    <property type="evidence" value="ECO:0007669"/>
    <property type="project" value="UniProtKB-UniRule"/>
</dbReference>
<dbReference type="Gene3D" id="3.40.50.10330">
    <property type="entry name" value="Probable inorganic polyphosphate/atp-NAD kinase, domain 1"/>
    <property type="match status" value="1"/>
</dbReference>
<dbReference type="Gene3D" id="2.60.200.30">
    <property type="entry name" value="Probable inorganic polyphosphate/atp-NAD kinase, domain 2"/>
    <property type="match status" value="1"/>
</dbReference>
<dbReference type="HAMAP" id="MF_00361">
    <property type="entry name" value="NAD_kinase"/>
    <property type="match status" value="1"/>
</dbReference>
<dbReference type="InterPro" id="IPR017438">
    <property type="entry name" value="ATP-NAD_kinase_N"/>
</dbReference>
<dbReference type="InterPro" id="IPR017437">
    <property type="entry name" value="ATP-NAD_kinase_PpnK-typ_C"/>
</dbReference>
<dbReference type="InterPro" id="IPR016064">
    <property type="entry name" value="NAD/diacylglycerol_kinase_sf"/>
</dbReference>
<dbReference type="InterPro" id="IPR002504">
    <property type="entry name" value="NADK"/>
</dbReference>
<dbReference type="NCBIfam" id="NF002984">
    <property type="entry name" value="PRK03708.1"/>
    <property type="match status" value="1"/>
</dbReference>
<dbReference type="PANTHER" id="PTHR20275:SF43">
    <property type="entry name" value="BIFUNCTIONAL NADP PHOSPHATASE_NAD KINASE"/>
    <property type="match status" value="1"/>
</dbReference>
<dbReference type="PANTHER" id="PTHR20275">
    <property type="entry name" value="NAD KINASE"/>
    <property type="match status" value="1"/>
</dbReference>
<dbReference type="Pfam" id="PF01513">
    <property type="entry name" value="NAD_kinase"/>
    <property type="match status" value="1"/>
</dbReference>
<dbReference type="Pfam" id="PF20143">
    <property type="entry name" value="NAD_kinase_C"/>
    <property type="match status" value="1"/>
</dbReference>
<dbReference type="SUPFAM" id="SSF111331">
    <property type="entry name" value="NAD kinase/diacylglycerol kinase-like"/>
    <property type="match status" value="1"/>
</dbReference>
<organism>
    <name type="scientific">Pyrococcus abyssi (strain GE5 / Orsay)</name>
    <dbReference type="NCBI Taxonomy" id="272844"/>
    <lineage>
        <taxon>Archaea</taxon>
        <taxon>Methanobacteriati</taxon>
        <taxon>Methanobacteriota</taxon>
        <taxon>Thermococci</taxon>
        <taxon>Thermococcales</taxon>
        <taxon>Thermococcaceae</taxon>
        <taxon>Pyrococcus</taxon>
    </lineage>
</organism>
<proteinExistence type="inferred from homology"/>
<comment type="function">
    <text evidence="1">Involved in the regulation of the intracellular balance of NAD and NADP, and is a key enzyme in the biosynthesis of NADP. Catalyzes specifically the phosphorylation on 2'-hydroxyl of the adenosine moiety of NAD to yield NADP.</text>
</comment>
<comment type="catalytic activity">
    <reaction evidence="1">
        <text>NAD(+) + ATP = ADP + NADP(+) + H(+)</text>
        <dbReference type="Rhea" id="RHEA:18629"/>
        <dbReference type="ChEBI" id="CHEBI:15378"/>
        <dbReference type="ChEBI" id="CHEBI:30616"/>
        <dbReference type="ChEBI" id="CHEBI:57540"/>
        <dbReference type="ChEBI" id="CHEBI:58349"/>
        <dbReference type="ChEBI" id="CHEBI:456216"/>
        <dbReference type="EC" id="2.7.1.23"/>
    </reaction>
</comment>
<comment type="cofactor">
    <cofactor evidence="1">
        <name>a divalent metal cation</name>
        <dbReference type="ChEBI" id="CHEBI:60240"/>
    </cofactor>
</comment>
<comment type="subcellular location">
    <subcellularLocation>
        <location evidence="1">Cytoplasm</location>
    </subcellularLocation>
</comment>
<comment type="similarity">
    <text evidence="1">Belongs to the NAD kinase family.</text>
</comment>
<name>NADK_PYRAB</name>
<accession>Q9V081</accession>
<accession>G8ZI77</accession>
<sequence>MRFGIVARRDREEALKLAYRVYDYLKVRGYDAIVDSETYEHFPHFKEEDIAKLEEFDVDFIIAIGGDGTILRIEHKTKKDIPILSINMGTLGFLTEVEPSETFFAINRLLRGEYYIDERIKLRTYINGEARIPDALNEVAILTGIPGKVIHLRYYVDGGLADEVRADGLVVATPTGSTGYAMSAGGPFVDPRLDTIIIAPLLPLPRTSVPMVVPGYSKIEIEFVTKREVILAVDGQYYEHLSPDIKIRIEKSPRKTKFVRFTREIYPKYTMRIKERH</sequence>
<feature type="chain" id="PRO_0000120705" description="NAD kinase">
    <location>
        <begin position="1"/>
        <end position="277"/>
    </location>
</feature>
<feature type="active site" description="Proton acceptor" evidence="1">
    <location>
        <position position="67"/>
    </location>
</feature>
<feature type="binding site" evidence="1">
    <location>
        <begin position="67"/>
        <end position="68"/>
    </location>
    <ligand>
        <name>NAD(+)</name>
        <dbReference type="ChEBI" id="CHEBI:57540"/>
    </ligand>
</feature>
<feature type="binding site" evidence="1">
    <location>
        <position position="72"/>
    </location>
    <ligand>
        <name>NAD(+)</name>
        <dbReference type="ChEBI" id="CHEBI:57540"/>
    </ligand>
</feature>
<feature type="binding site" evidence="1">
    <location>
        <begin position="137"/>
        <end position="138"/>
    </location>
    <ligand>
        <name>NAD(+)</name>
        <dbReference type="ChEBI" id="CHEBI:57540"/>
    </ligand>
</feature>
<feature type="binding site" evidence="1">
    <location>
        <position position="148"/>
    </location>
    <ligand>
        <name>NAD(+)</name>
        <dbReference type="ChEBI" id="CHEBI:57540"/>
    </ligand>
</feature>
<feature type="binding site" evidence="1">
    <location>
        <position position="165"/>
    </location>
    <ligand>
        <name>NAD(+)</name>
        <dbReference type="ChEBI" id="CHEBI:57540"/>
    </ligand>
</feature>
<feature type="binding site" evidence="1">
    <location>
        <position position="167"/>
    </location>
    <ligand>
        <name>NAD(+)</name>
        <dbReference type="ChEBI" id="CHEBI:57540"/>
    </ligand>
</feature>
<feature type="binding site" evidence="1">
    <location>
        <begin position="178"/>
        <end position="183"/>
    </location>
    <ligand>
        <name>NAD(+)</name>
        <dbReference type="ChEBI" id="CHEBI:57540"/>
    </ligand>
</feature>
<feature type="binding site" evidence="1">
    <location>
        <position position="202"/>
    </location>
    <ligand>
        <name>NAD(+)</name>
        <dbReference type="ChEBI" id="CHEBI:57540"/>
    </ligand>
</feature>
<feature type="binding site" evidence="1">
    <location>
        <position position="236"/>
    </location>
    <ligand>
        <name>NAD(+)</name>
        <dbReference type="ChEBI" id="CHEBI:57540"/>
    </ligand>
</feature>
<evidence type="ECO:0000255" key="1">
    <source>
        <dbReference type="HAMAP-Rule" id="MF_00361"/>
    </source>
</evidence>